<accession>Q9BYN8</accession>
<accession>Q96Q58</accession>
<gene>
    <name type="primary">MRPS26</name>
    <name type="synonym">C20orf193</name>
    <name type="synonym">RPMS13</name>
</gene>
<comment type="subunit">
    <text evidence="2">Component of the mitochondrial small ribosomal subunit (mt-SSU). Mature mammalian 55S mitochondrial ribosomes consist of a small (28S) and a large (39S) subunit. The 28S small subunit contains a 12S ribosomal RNA (12S mt-rRNA) and 30 different proteins. The 39S large subunit contains a 16S rRNA (16S mt-rRNA), a copy of mitochondrial valine transfer RNA (mt-tRNA(Val)), which plays an integral structural role, and 52 different proteins.</text>
</comment>
<comment type="subcellular location">
    <subcellularLocation>
        <location evidence="2">Mitochondrion</location>
    </subcellularLocation>
</comment>
<comment type="similarity">
    <text evidence="4">Belongs to the mitochondrion-specific ribosomal protein mS26 family.</text>
</comment>
<protein>
    <recommendedName>
        <fullName evidence="3">Small ribosomal subunit protein mS26</fullName>
    </recommendedName>
    <alternativeName>
        <fullName>28S ribosomal protein S13, mitochondrial</fullName>
        <shortName>MRP-S13</shortName>
        <shortName>S13mt</shortName>
    </alternativeName>
    <alternativeName>
        <fullName>28S ribosomal protein S26, mitochondrial</fullName>
        <shortName>MRP-S26</shortName>
        <shortName>S26mt</shortName>
    </alternativeName>
</protein>
<evidence type="ECO:0000250" key="1"/>
<evidence type="ECO:0000269" key="2">
    <source>
    </source>
</evidence>
<evidence type="ECO:0000303" key="3">
    <source>
    </source>
</evidence>
<evidence type="ECO:0000305" key="4"/>
<evidence type="ECO:0007829" key="5">
    <source>
        <dbReference type="PDB" id="8CSQ"/>
    </source>
</evidence>
<evidence type="ECO:0007829" key="6">
    <source>
        <dbReference type="PDB" id="8CSS"/>
    </source>
</evidence>
<keyword id="KW-0002">3D-structure</keyword>
<keyword id="KW-0496">Mitochondrion</keyword>
<keyword id="KW-1267">Proteomics identification</keyword>
<keyword id="KW-1185">Reference proteome</keyword>
<keyword id="KW-0687">Ribonucleoprotein</keyword>
<keyword id="KW-0689">Ribosomal protein</keyword>
<keyword id="KW-0809">Transit peptide</keyword>
<proteinExistence type="evidence at protein level"/>
<feature type="transit peptide" description="Mitochondrion" evidence="1">
    <location>
        <begin position="1"/>
        <end position="27"/>
    </location>
</feature>
<feature type="chain" id="PRO_0000030591" description="Small ribosomal subunit protein mS26">
    <location>
        <begin position="28"/>
        <end position="205"/>
    </location>
</feature>
<feature type="helix" evidence="5">
    <location>
        <begin position="36"/>
        <end position="38"/>
    </location>
</feature>
<feature type="helix" evidence="6">
    <location>
        <begin position="50"/>
        <end position="87"/>
    </location>
</feature>
<feature type="helix" evidence="6">
    <location>
        <begin position="89"/>
        <end position="164"/>
    </location>
</feature>
<feature type="strand" evidence="6">
    <location>
        <begin position="170"/>
        <end position="172"/>
    </location>
</feature>
<feature type="helix" evidence="6">
    <location>
        <begin position="173"/>
        <end position="181"/>
    </location>
</feature>
<sequence>MLRALSRLGAGTPCRPRAPLVLPARGRKTRHDPLAKSKIERVNMPPAVDPAEFFVLMERYQHYRQTVRALRMEFVSEVQRKVHEARAGVLAERKALKDAAEHRELMAWNQAENRRLHELRIARLRQEEREQEQRQALEQARKAEEVQAWAQRKEREVLQLQEEVKNFITRENLEARVEAALDSRKNYNWAITREGLVVRPQRRDS</sequence>
<dbReference type="EMBL" id="AL121905">
    <property type="status" value="NOT_ANNOTATED_CDS"/>
    <property type="molecule type" value="Genomic_DNA"/>
</dbReference>
<dbReference type="EMBL" id="BC013018">
    <property type="protein sequence ID" value="AAH13018.1"/>
    <property type="molecule type" value="mRNA"/>
</dbReference>
<dbReference type="EMBL" id="AB051354">
    <property type="protein sequence ID" value="BAB54943.1"/>
    <property type="molecule type" value="Genomic_DNA"/>
</dbReference>
<dbReference type="CCDS" id="CCDS13043.1"/>
<dbReference type="RefSeq" id="NP_110438.1">
    <property type="nucleotide sequence ID" value="NM_030811.4"/>
</dbReference>
<dbReference type="PDB" id="3J9M">
    <property type="method" value="EM"/>
    <property type="resolution" value="3.50 A"/>
    <property type="chains" value="AU=1-205"/>
</dbReference>
<dbReference type="PDB" id="6NU2">
    <property type="method" value="EM"/>
    <property type="resolution" value="3.90 A"/>
    <property type="chains" value="AU=27-199"/>
</dbReference>
<dbReference type="PDB" id="6NU3">
    <property type="method" value="EM"/>
    <property type="resolution" value="4.40 A"/>
    <property type="chains" value="AU=1-205"/>
</dbReference>
<dbReference type="PDB" id="6RW4">
    <property type="method" value="EM"/>
    <property type="resolution" value="2.97 A"/>
    <property type="chains" value="U=1-205"/>
</dbReference>
<dbReference type="PDB" id="6RW5">
    <property type="method" value="EM"/>
    <property type="resolution" value="3.14 A"/>
    <property type="chains" value="U=1-205"/>
</dbReference>
<dbReference type="PDB" id="6VLZ">
    <property type="method" value="EM"/>
    <property type="resolution" value="2.97 A"/>
    <property type="chains" value="AU=1-205"/>
</dbReference>
<dbReference type="PDB" id="6VMI">
    <property type="method" value="EM"/>
    <property type="resolution" value="2.96 A"/>
    <property type="chains" value="AU=1-205"/>
</dbReference>
<dbReference type="PDB" id="6ZM5">
    <property type="method" value="EM"/>
    <property type="resolution" value="2.89 A"/>
    <property type="chains" value="AU=1-205"/>
</dbReference>
<dbReference type="PDB" id="6ZM6">
    <property type="method" value="EM"/>
    <property type="resolution" value="2.59 A"/>
    <property type="chains" value="AU=1-205"/>
</dbReference>
<dbReference type="PDB" id="6ZS9">
    <property type="method" value="EM"/>
    <property type="resolution" value="4.00 A"/>
    <property type="chains" value="AU=1-205"/>
</dbReference>
<dbReference type="PDB" id="6ZSA">
    <property type="method" value="EM"/>
    <property type="resolution" value="4.00 A"/>
    <property type="chains" value="AU=1-205"/>
</dbReference>
<dbReference type="PDB" id="6ZSB">
    <property type="method" value="EM"/>
    <property type="resolution" value="4.50 A"/>
    <property type="chains" value="AU=1-205"/>
</dbReference>
<dbReference type="PDB" id="6ZSC">
    <property type="method" value="EM"/>
    <property type="resolution" value="3.50 A"/>
    <property type="chains" value="AU=1-205"/>
</dbReference>
<dbReference type="PDB" id="6ZSD">
    <property type="method" value="EM"/>
    <property type="resolution" value="3.70 A"/>
    <property type="chains" value="AU=1-205"/>
</dbReference>
<dbReference type="PDB" id="6ZSE">
    <property type="method" value="EM"/>
    <property type="resolution" value="5.00 A"/>
    <property type="chains" value="AU=1-205"/>
</dbReference>
<dbReference type="PDB" id="6ZSG">
    <property type="method" value="EM"/>
    <property type="resolution" value="4.00 A"/>
    <property type="chains" value="AU=1-205"/>
</dbReference>
<dbReference type="PDB" id="7A5F">
    <property type="method" value="EM"/>
    <property type="resolution" value="4.40 A"/>
    <property type="chains" value="U6=1-205"/>
</dbReference>
<dbReference type="PDB" id="7A5G">
    <property type="method" value="EM"/>
    <property type="resolution" value="4.33 A"/>
    <property type="chains" value="U6=1-205"/>
</dbReference>
<dbReference type="PDB" id="7A5I">
    <property type="method" value="EM"/>
    <property type="resolution" value="3.70 A"/>
    <property type="chains" value="U6=1-205"/>
</dbReference>
<dbReference type="PDB" id="7A5K">
    <property type="method" value="EM"/>
    <property type="resolution" value="3.70 A"/>
    <property type="chains" value="U6=1-205"/>
</dbReference>
<dbReference type="PDB" id="7L08">
    <property type="method" value="EM"/>
    <property type="resolution" value="3.49 A"/>
    <property type="chains" value="AU=1-205"/>
</dbReference>
<dbReference type="PDB" id="7OG4">
    <property type="method" value="EM"/>
    <property type="resolution" value="3.80 A"/>
    <property type="chains" value="AU=1-205"/>
</dbReference>
<dbReference type="PDB" id="7P2E">
    <property type="method" value="EM"/>
    <property type="resolution" value="2.40 A"/>
    <property type="chains" value="U=1-205"/>
</dbReference>
<dbReference type="PDB" id="7PNX">
    <property type="method" value="EM"/>
    <property type="resolution" value="2.76 A"/>
    <property type="chains" value="U=1-205"/>
</dbReference>
<dbReference type="PDB" id="7PNY">
    <property type="method" value="EM"/>
    <property type="resolution" value="3.06 A"/>
    <property type="chains" value="U=1-205"/>
</dbReference>
<dbReference type="PDB" id="7PNZ">
    <property type="method" value="EM"/>
    <property type="resolution" value="3.09 A"/>
    <property type="chains" value="U=1-205"/>
</dbReference>
<dbReference type="PDB" id="7PO0">
    <property type="method" value="EM"/>
    <property type="resolution" value="2.90 A"/>
    <property type="chains" value="U=1-205"/>
</dbReference>
<dbReference type="PDB" id="7PO1">
    <property type="method" value="EM"/>
    <property type="resolution" value="2.92 A"/>
    <property type="chains" value="U=1-205"/>
</dbReference>
<dbReference type="PDB" id="7PO2">
    <property type="method" value="EM"/>
    <property type="resolution" value="3.09 A"/>
    <property type="chains" value="U=1-205"/>
</dbReference>
<dbReference type="PDB" id="7PO3">
    <property type="method" value="EM"/>
    <property type="resolution" value="2.92 A"/>
    <property type="chains" value="U=1-205"/>
</dbReference>
<dbReference type="PDB" id="7QI4">
    <property type="method" value="EM"/>
    <property type="resolution" value="2.21 A"/>
    <property type="chains" value="AU=1-205"/>
</dbReference>
<dbReference type="PDB" id="7QI5">
    <property type="method" value="EM"/>
    <property type="resolution" value="2.63 A"/>
    <property type="chains" value="AU=1-205"/>
</dbReference>
<dbReference type="PDB" id="7QI6">
    <property type="method" value="EM"/>
    <property type="resolution" value="2.98 A"/>
    <property type="chains" value="AU=1-205"/>
</dbReference>
<dbReference type="PDB" id="8ANY">
    <property type="method" value="EM"/>
    <property type="resolution" value="2.85 A"/>
    <property type="chains" value="AU=1-205"/>
</dbReference>
<dbReference type="PDB" id="8CSP">
    <property type="method" value="EM"/>
    <property type="resolution" value="2.66 A"/>
    <property type="chains" value="U=1-205"/>
</dbReference>
<dbReference type="PDB" id="8CSQ">
    <property type="method" value="EM"/>
    <property type="resolution" value="2.54 A"/>
    <property type="chains" value="U=1-205"/>
</dbReference>
<dbReference type="PDB" id="8CSR">
    <property type="method" value="EM"/>
    <property type="resolution" value="2.54 A"/>
    <property type="chains" value="U=1-205"/>
</dbReference>
<dbReference type="PDB" id="8CSS">
    <property type="method" value="EM"/>
    <property type="resolution" value="2.36 A"/>
    <property type="chains" value="U=1-205"/>
</dbReference>
<dbReference type="PDB" id="8CST">
    <property type="method" value="EM"/>
    <property type="resolution" value="2.85 A"/>
    <property type="chains" value="U=1-205"/>
</dbReference>
<dbReference type="PDB" id="8CSU">
    <property type="method" value="EM"/>
    <property type="resolution" value="3.03 A"/>
    <property type="chains" value="U=1-205"/>
</dbReference>
<dbReference type="PDB" id="8K2A">
    <property type="method" value="EM"/>
    <property type="resolution" value="2.90 A"/>
    <property type="chains" value="Sb=1-205"/>
</dbReference>
<dbReference type="PDB" id="8OIR">
    <property type="method" value="EM"/>
    <property type="resolution" value="3.10 A"/>
    <property type="chains" value="AU=1-205"/>
</dbReference>
<dbReference type="PDB" id="8OIS">
    <property type="method" value="EM"/>
    <property type="resolution" value="3.00 A"/>
    <property type="chains" value="AU=1-205"/>
</dbReference>
<dbReference type="PDB" id="8QRK">
    <property type="method" value="EM"/>
    <property type="resolution" value="6.69 A"/>
    <property type="chains" value="U=1-205"/>
</dbReference>
<dbReference type="PDB" id="8QRL">
    <property type="method" value="EM"/>
    <property type="resolution" value="3.34 A"/>
    <property type="chains" value="U=1-205"/>
</dbReference>
<dbReference type="PDB" id="8QRM">
    <property type="method" value="EM"/>
    <property type="resolution" value="3.05 A"/>
    <property type="chains" value="U=1-205"/>
</dbReference>
<dbReference type="PDB" id="8QRN">
    <property type="method" value="EM"/>
    <property type="resolution" value="2.98 A"/>
    <property type="chains" value="U=1-205"/>
</dbReference>
<dbReference type="PDB" id="8RRI">
    <property type="method" value="EM"/>
    <property type="resolution" value="2.40 A"/>
    <property type="chains" value="AU=1-205"/>
</dbReference>
<dbReference type="PDB" id="8XT0">
    <property type="method" value="EM"/>
    <property type="resolution" value="3.20 A"/>
    <property type="chains" value="Sb=1-205"/>
</dbReference>
<dbReference type="PDB" id="8XT2">
    <property type="method" value="EM"/>
    <property type="resolution" value="3.30 A"/>
    <property type="chains" value="Sb=1-205"/>
</dbReference>
<dbReference type="PDBsum" id="3J9M"/>
<dbReference type="PDBsum" id="6NU2"/>
<dbReference type="PDBsum" id="6NU3"/>
<dbReference type="PDBsum" id="6RW4"/>
<dbReference type="PDBsum" id="6RW5"/>
<dbReference type="PDBsum" id="6VLZ"/>
<dbReference type="PDBsum" id="6VMI"/>
<dbReference type="PDBsum" id="6ZM5"/>
<dbReference type="PDBsum" id="6ZM6"/>
<dbReference type="PDBsum" id="6ZS9"/>
<dbReference type="PDBsum" id="6ZSA"/>
<dbReference type="PDBsum" id="6ZSB"/>
<dbReference type="PDBsum" id="6ZSC"/>
<dbReference type="PDBsum" id="6ZSD"/>
<dbReference type="PDBsum" id="6ZSE"/>
<dbReference type="PDBsum" id="6ZSG"/>
<dbReference type="PDBsum" id="7A5F"/>
<dbReference type="PDBsum" id="7A5G"/>
<dbReference type="PDBsum" id="7A5I"/>
<dbReference type="PDBsum" id="7A5K"/>
<dbReference type="PDBsum" id="7L08"/>
<dbReference type="PDBsum" id="7OG4"/>
<dbReference type="PDBsum" id="7P2E"/>
<dbReference type="PDBsum" id="7PNX"/>
<dbReference type="PDBsum" id="7PNY"/>
<dbReference type="PDBsum" id="7PNZ"/>
<dbReference type="PDBsum" id="7PO0"/>
<dbReference type="PDBsum" id="7PO1"/>
<dbReference type="PDBsum" id="7PO2"/>
<dbReference type="PDBsum" id="7PO3"/>
<dbReference type="PDBsum" id="7QI4"/>
<dbReference type="PDBsum" id="7QI5"/>
<dbReference type="PDBsum" id="7QI6"/>
<dbReference type="PDBsum" id="8ANY"/>
<dbReference type="PDBsum" id="8CSP"/>
<dbReference type="PDBsum" id="8CSQ"/>
<dbReference type="PDBsum" id="8CSR"/>
<dbReference type="PDBsum" id="8CSS"/>
<dbReference type="PDBsum" id="8CST"/>
<dbReference type="PDBsum" id="8CSU"/>
<dbReference type="PDBsum" id="8K2A"/>
<dbReference type="PDBsum" id="8OIR"/>
<dbReference type="PDBsum" id="8OIS"/>
<dbReference type="PDBsum" id="8QRK"/>
<dbReference type="PDBsum" id="8QRL"/>
<dbReference type="PDBsum" id="8QRM"/>
<dbReference type="PDBsum" id="8QRN"/>
<dbReference type="PDBsum" id="8RRI"/>
<dbReference type="PDBsum" id="8XT0"/>
<dbReference type="PDBsum" id="8XT2"/>
<dbReference type="EMDB" id="EMD-0514"/>
<dbReference type="EMDB" id="EMD-0515"/>
<dbReference type="EMDB" id="EMD-10021"/>
<dbReference type="EMDB" id="EMD-10022"/>
<dbReference type="EMDB" id="EMD-11278"/>
<dbReference type="EMDB" id="EMD-11279"/>
<dbReference type="EMDB" id="EMD-11390"/>
<dbReference type="EMDB" id="EMD-11391"/>
<dbReference type="EMDB" id="EMD-11392"/>
<dbReference type="EMDB" id="EMD-11393"/>
<dbReference type="EMDB" id="EMD-11394"/>
<dbReference type="EMDB" id="EMD-11395"/>
<dbReference type="EMDB" id="EMD-11397"/>
<dbReference type="EMDB" id="EMD-11641"/>
<dbReference type="EMDB" id="EMD-11642"/>
<dbReference type="EMDB" id="EMD-11644"/>
<dbReference type="EMDB" id="EMD-11646"/>
<dbReference type="EMDB" id="EMD-12877"/>
<dbReference type="EMDB" id="EMD-13170"/>
<dbReference type="EMDB" id="EMD-13555"/>
<dbReference type="EMDB" id="EMD-13556"/>
<dbReference type="EMDB" id="EMD-13557"/>
<dbReference type="EMDB" id="EMD-13558"/>
<dbReference type="EMDB" id="EMD-13559"/>
<dbReference type="EMDB" id="EMD-13560"/>
<dbReference type="EMDB" id="EMD-13561"/>
<dbReference type="EMDB" id="EMD-13980"/>
<dbReference type="EMDB" id="EMD-13981"/>
<dbReference type="EMDB" id="EMD-13982"/>
<dbReference type="EMDB" id="EMD-15544"/>
<dbReference type="EMDB" id="EMD-16897"/>
<dbReference type="EMDB" id="EMD-16898"/>
<dbReference type="EMDB" id="EMD-19460"/>
<dbReference type="EMDB" id="EMD-21233"/>
<dbReference type="EMDB" id="EMD-21242"/>
<dbReference type="EMDB" id="EMD-23096"/>
<dbReference type="EMDB" id="EMD-26966"/>
<dbReference type="EMDB" id="EMD-26967"/>
<dbReference type="EMDB" id="EMD-26968"/>
<dbReference type="EMDB" id="EMD-26969"/>
<dbReference type="EMDB" id="EMD-26970"/>
<dbReference type="EMDB" id="EMD-26971"/>
<dbReference type="EMDB" id="EMD-36836"/>
<dbReference type="EMDB" id="EMD-38632"/>
<dbReference type="EMDB" id="EMD-38634"/>
<dbReference type="SMR" id="Q9BYN8"/>
<dbReference type="BioGRID" id="122356">
    <property type="interactions" value="457"/>
</dbReference>
<dbReference type="ComplexPortal" id="CPX-5225">
    <property type="entry name" value="28S mitochondrial small ribosomal subunit"/>
</dbReference>
<dbReference type="CORUM" id="Q9BYN8"/>
<dbReference type="FunCoup" id="Q9BYN8">
    <property type="interactions" value="1617"/>
</dbReference>
<dbReference type="IntAct" id="Q9BYN8">
    <property type="interactions" value="164"/>
</dbReference>
<dbReference type="MINT" id="Q9BYN8"/>
<dbReference type="STRING" id="9606.ENSP00000369682"/>
<dbReference type="GlyGen" id="Q9BYN8">
    <property type="glycosylation" value="1 site, 1 O-linked glycan (1 site)"/>
</dbReference>
<dbReference type="iPTMnet" id="Q9BYN8"/>
<dbReference type="MetOSite" id="Q9BYN8"/>
<dbReference type="PhosphoSitePlus" id="Q9BYN8"/>
<dbReference type="BioMuta" id="MRPS26"/>
<dbReference type="DMDM" id="28201886"/>
<dbReference type="jPOST" id="Q9BYN8"/>
<dbReference type="MassIVE" id="Q9BYN8"/>
<dbReference type="PaxDb" id="9606-ENSP00000369682"/>
<dbReference type="PeptideAtlas" id="Q9BYN8"/>
<dbReference type="ProteomicsDB" id="79673"/>
<dbReference type="Pumba" id="Q9BYN8"/>
<dbReference type="TopDownProteomics" id="Q9BYN8"/>
<dbReference type="Antibodypedia" id="48846">
    <property type="antibodies" value="98 antibodies from 25 providers"/>
</dbReference>
<dbReference type="DNASU" id="64949"/>
<dbReference type="Ensembl" id="ENST00000380325.4">
    <property type="protein sequence ID" value="ENSP00000369682.3"/>
    <property type="gene ID" value="ENSG00000125901.6"/>
</dbReference>
<dbReference type="GeneID" id="64949"/>
<dbReference type="KEGG" id="hsa:64949"/>
<dbReference type="MANE-Select" id="ENST00000380325.4">
    <property type="protein sequence ID" value="ENSP00000369682.3"/>
    <property type="RefSeq nucleotide sequence ID" value="NM_030811.4"/>
    <property type="RefSeq protein sequence ID" value="NP_110438.1"/>
</dbReference>
<dbReference type="UCSC" id="uc002whs.4">
    <property type="organism name" value="human"/>
</dbReference>
<dbReference type="AGR" id="HGNC:14045"/>
<dbReference type="CTD" id="64949"/>
<dbReference type="GeneCards" id="MRPS26"/>
<dbReference type="HGNC" id="HGNC:14045">
    <property type="gene designation" value="MRPS26"/>
</dbReference>
<dbReference type="HPA" id="ENSG00000125901">
    <property type="expression patterns" value="Low tissue specificity"/>
</dbReference>
<dbReference type="MIM" id="611988">
    <property type="type" value="gene"/>
</dbReference>
<dbReference type="neXtProt" id="NX_Q9BYN8"/>
<dbReference type="OpenTargets" id="ENSG00000125901"/>
<dbReference type="PharmGKB" id="PA31014"/>
<dbReference type="VEuPathDB" id="HostDB:ENSG00000125901"/>
<dbReference type="eggNOG" id="KOG4691">
    <property type="taxonomic scope" value="Eukaryota"/>
</dbReference>
<dbReference type="GeneTree" id="ENSGT00390000008453"/>
<dbReference type="HOGENOM" id="CLU_104778_0_0_1"/>
<dbReference type="InParanoid" id="Q9BYN8"/>
<dbReference type="OMA" id="AWVQLKE"/>
<dbReference type="OrthoDB" id="5988811at2759"/>
<dbReference type="PAN-GO" id="Q9BYN8">
    <property type="GO annotations" value="1 GO annotation based on evolutionary models"/>
</dbReference>
<dbReference type="PhylomeDB" id="Q9BYN8"/>
<dbReference type="TreeFam" id="TF316309"/>
<dbReference type="PathwayCommons" id="Q9BYN8"/>
<dbReference type="Reactome" id="R-HSA-5368286">
    <property type="pathway name" value="Mitochondrial translation initiation"/>
</dbReference>
<dbReference type="Reactome" id="R-HSA-5389840">
    <property type="pathway name" value="Mitochondrial translation elongation"/>
</dbReference>
<dbReference type="Reactome" id="R-HSA-5419276">
    <property type="pathway name" value="Mitochondrial translation termination"/>
</dbReference>
<dbReference type="SignaLink" id="Q9BYN8"/>
<dbReference type="SIGNOR" id="Q9BYN8"/>
<dbReference type="BioGRID-ORCS" id="64949">
    <property type="hits" value="325 hits in 1155 CRISPR screens"/>
</dbReference>
<dbReference type="ChiTaRS" id="MRPS26">
    <property type="organism name" value="human"/>
</dbReference>
<dbReference type="GeneWiki" id="MRPS26"/>
<dbReference type="GenomeRNAi" id="64949"/>
<dbReference type="Pharos" id="Q9BYN8">
    <property type="development level" value="Tdark"/>
</dbReference>
<dbReference type="PRO" id="PR:Q9BYN8"/>
<dbReference type="Proteomes" id="UP000005640">
    <property type="component" value="Chromosome 20"/>
</dbReference>
<dbReference type="RNAct" id="Q9BYN8">
    <property type="molecule type" value="protein"/>
</dbReference>
<dbReference type="Bgee" id="ENSG00000125901">
    <property type="expression patterns" value="Expressed in adenohypophysis and 184 other cell types or tissues"/>
</dbReference>
<dbReference type="GO" id="GO:0005743">
    <property type="term" value="C:mitochondrial inner membrane"/>
    <property type="evidence" value="ECO:0000304"/>
    <property type="project" value="Reactome"/>
</dbReference>
<dbReference type="GO" id="GO:0005763">
    <property type="term" value="C:mitochondrial small ribosomal subunit"/>
    <property type="evidence" value="ECO:0000318"/>
    <property type="project" value="GO_Central"/>
</dbReference>
<dbReference type="GO" id="GO:0005739">
    <property type="term" value="C:mitochondrion"/>
    <property type="evidence" value="ECO:0000314"/>
    <property type="project" value="HPA"/>
</dbReference>
<dbReference type="GO" id="GO:0005654">
    <property type="term" value="C:nucleoplasm"/>
    <property type="evidence" value="ECO:0000314"/>
    <property type="project" value="HPA"/>
</dbReference>
<dbReference type="GO" id="GO:0003723">
    <property type="term" value="F:RNA binding"/>
    <property type="evidence" value="ECO:0007005"/>
    <property type="project" value="UniProtKB"/>
</dbReference>
<dbReference type="GO" id="GO:0032543">
    <property type="term" value="P:mitochondrial translation"/>
    <property type="evidence" value="ECO:0000303"/>
    <property type="project" value="ComplexPortal"/>
</dbReference>
<dbReference type="InterPro" id="IPR026140">
    <property type="entry name" value="Ribosomal_mS26"/>
</dbReference>
<dbReference type="PANTHER" id="PTHR21035">
    <property type="entry name" value="28S RIBOSOMAL PROTEIN S26, MITOCHONDRIAL"/>
    <property type="match status" value="1"/>
</dbReference>
<dbReference type="PANTHER" id="PTHR21035:SF2">
    <property type="entry name" value="SMALL RIBOSOMAL SUBUNIT PROTEIN MS26"/>
    <property type="match status" value="1"/>
</dbReference>
<dbReference type="Pfam" id="PF14943">
    <property type="entry name" value="MRP-S26"/>
    <property type="match status" value="1"/>
</dbReference>
<name>RT26_HUMAN</name>
<reference key="1">
    <citation type="journal article" date="2001" name="Nature">
        <title>The DNA sequence and comparative analysis of human chromosome 20.</title>
        <authorList>
            <person name="Deloukas P."/>
            <person name="Matthews L.H."/>
            <person name="Ashurst J.L."/>
            <person name="Burton J."/>
            <person name="Gilbert J.G.R."/>
            <person name="Jones M."/>
            <person name="Stavrides G."/>
            <person name="Almeida J.P."/>
            <person name="Babbage A.K."/>
            <person name="Bagguley C.L."/>
            <person name="Bailey J."/>
            <person name="Barlow K.F."/>
            <person name="Bates K.N."/>
            <person name="Beard L.M."/>
            <person name="Beare D.M."/>
            <person name="Beasley O.P."/>
            <person name="Bird C.P."/>
            <person name="Blakey S.E."/>
            <person name="Bridgeman A.M."/>
            <person name="Brown A.J."/>
            <person name="Buck D."/>
            <person name="Burrill W.D."/>
            <person name="Butler A.P."/>
            <person name="Carder C."/>
            <person name="Carter N.P."/>
            <person name="Chapman J.C."/>
            <person name="Clamp M."/>
            <person name="Clark G."/>
            <person name="Clark L.N."/>
            <person name="Clark S.Y."/>
            <person name="Clee C.M."/>
            <person name="Clegg S."/>
            <person name="Cobley V.E."/>
            <person name="Collier R.E."/>
            <person name="Connor R.E."/>
            <person name="Corby N.R."/>
            <person name="Coulson A."/>
            <person name="Coville G.J."/>
            <person name="Deadman R."/>
            <person name="Dhami P.D."/>
            <person name="Dunn M."/>
            <person name="Ellington A.G."/>
            <person name="Frankland J.A."/>
            <person name="Fraser A."/>
            <person name="French L."/>
            <person name="Garner P."/>
            <person name="Grafham D.V."/>
            <person name="Griffiths C."/>
            <person name="Griffiths M.N.D."/>
            <person name="Gwilliam R."/>
            <person name="Hall R.E."/>
            <person name="Hammond S."/>
            <person name="Harley J.L."/>
            <person name="Heath P.D."/>
            <person name="Ho S."/>
            <person name="Holden J.L."/>
            <person name="Howden P.J."/>
            <person name="Huckle E."/>
            <person name="Hunt A.R."/>
            <person name="Hunt S.E."/>
            <person name="Jekosch K."/>
            <person name="Johnson C.M."/>
            <person name="Johnson D."/>
            <person name="Kay M.P."/>
            <person name="Kimberley A.M."/>
            <person name="King A."/>
            <person name="Knights A."/>
            <person name="Laird G.K."/>
            <person name="Lawlor S."/>
            <person name="Lehvaeslaiho M.H."/>
            <person name="Leversha M.A."/>
            <person name="Lloyd C."/>
            <person name="Lloyd D.M."/>
            <person name="Lovell J.D."/>
            <person name="Marsh V.L."/>
            <person name="Martin S.L."/>
            <person name="McConnachie L.J."/>
            <person name="McLay K."/>
            <person name="McMurray A.A."/>
            <person name="Milne S.A."/>
            <person name="Mistry D."/>
            <person name="Moore M.J.F."/>
            <person name="Mullikin J.C."/>
            <person name="Nickerson T."/>
            <person name="Oliver K."/>
            <person name="Parker A."/>
            <person name="Patel R."/>
            <person name="Pearce T.A.V."/>
            <person name="Peck A.I."/>
            <person name="Phillimore B.J.C.T."/>
            <person name="Prathalingam S.R."/>
            <person name="Plumb R.W."/>
            <person name="Ramsay H."/>
            <person name="Rice C.M."/>
            <person name="Ross M.T."/>
            <person name="Scott C.E."/>
            <person name="Sehra H.K."/>
            <person name="Shownkeen R."/>
            <person name="Sims S."/>
            <person name="Skuce C.D."/>
            <person name="Smith M.L."/>
            <person name="Soderlund C."/>
            <person name="Steward C.A."/>
            <person name="Sulston J.E."/>
            <person name="Swann R.M."/>
            <person name="Sycamore N."/>
            <person name="Taylor R."/>
            <person name="Tee L."/>
            <person name="Thomas D.W."/>
            <person name="Thorpe A."/>
            <person name="Tracey A."/>
            <person name="Tromans A.C."/>
            <person name="Vaudin M."/>
            <person name="Wall M."/>
            <person name="Wallis J.M."/>
            <person name="Whitehead S.L."/>
            <person name="Whittaker P."/>
            <person name="Willey D.L."/>
            <person name="Williams L."/>
            <person name="Williams S.A."/>
            <person name="Wilming L."/>
            <person name="Wray P.W."/>
            <person name="Hubbard T."/>
            <person name="Durbin R.M."/>
            <person name="Bentley D.R."/>
            <person name="Beck S."/>
            <person name="Rogers J."/>
        </authorList>
    </citation>
    <scope>NUCLEOTIDE SEQUENCE [LARGE SCALE GENOMIC DNA]</scope>
</reference>
<reference key="2">
    <citation type="journal article" date="2004" name="Genome Res.">
        <title>The status, quality, and expansion of the NIH full-length cDNA project: the Mammalian Gene Collection (MGC).</title>
        <authorList>
            <consortium name="The MGC Project Team"/>
        </authorList>
    </citation>
    <scope>NUCLEOTIDE SEQUENCE [LARGE SCALE MRNA]</scope>
    <source>
        <tissue>Skin</tissue>
    </source>
</reference>
<reference key="3">
    <citation type="journal article" date="2001" name="Genomics">
        <title>The human mitochondrial ribosomal protein genes: mapping of 54 genes to the chromosomes and implications for human disorders.</title>
        <authorList>
            <person name="Kenmochi N."/>
            <person name="Suzuki T."/>
            <person name="Uechi T."/>
            <person name="Magoori M."/>
            <person name="Kuniba M."/>
            <person name="Higa S."/>
            <person name="Watanabe K."/>
            <person name="Tanaka T."/>
        </authorList>
    </citation>
    <scope>NUCLEOTIDE SEQUENCE OF 162-192</scope>
</reference>
<reference key="4">
    <citation type="journal article" date="2001" name="J. Biol. Chem.">
        <title>The small subunit of the mammalian mitochondrial ribosome: identification of the full complement of ribosomal proteins present.</title>
        <authorList>
            <person name="Koc E.C."/>
            <person name="Burkhart W."/>
            <person name="Blackburn K."/>
            <person name="Moseley A."/>
            <person name="Spremulli L.L."/>
        </authorList>
    </citation>
    <scope>IDENTIFICATION</scope>
</reference>
<reference key="5">
    <citation type="journal article" date="2011" name="BMC Syst. Biol.">
        <title>Initial characterization of the human central proteome.</title>
        <authorList>
            <person name="Burkard T.R."/>
            <person name="Planyavsky M."/>
            <person name="Kaupe I."/>
            <person name="Breitwieser F.P."/>
            <person name="Buerckstuemmer T."/>
            <person name="Bennett K.L."/>
            <person name="Superti-Furga G."/>
            <person name="Colinge J."/>
        </authorList>
    </citation>
    <scope>IDENTIFICATION BY MASS SPECTROMETRY [LARGE SCALE ANALYSIS]</scope>
</reference>
<reference key="6">
    <citation type="journal article" date="2015" name="Proteomics">
        <title>N-terminome analysis of the human mitochondrial proteome.</title>
        <authorList>
            <person name="Vaca Jacome A.S."/>
            <person name="Rabilloud T."/>
            <person name="Schaeffer-Reiss C."/>
            <person name="Rompais M."/>
            <person name="Ayoub D."/>
            <person name="Lane L."/>
            <person name="Bairoch A."/>
            <person name="Van Dorsselaer A."/>
            <person name="Carapito C."/>
        </authorList>
    </citation>
    <scope>IDENTIFICATION BY MASS SPECTROMETRY [LARGE SCALE ANALYSIS]</scope>
</reference>
<reference key="7">
    <citation type="journal article" date="2015" name="Science">
        <title>Ribosome. The structure of the human mitochondrial ribosome.</title>
        <authorList>
            <person name="Amunts A."/>
            <person name="Brown A."/>
            <person name="Toots J."/>
            <person name="Scheres S.H."/>
            <person name="Ramakrishnan V."/>
        </authorList>
    </citation>
    <scope>STRUCTURE BY ELECTRON MICROSCOPY (3.50 ANGSTROMS)</scope>
    <scope>SUBUNIT</scope>
    <scope>SUBCELLULAR LOCATION</scope>
</reference>
<organism>
    <name type="scientific">Homo sapiens</name>
    <name type="common">Human</name>
    <dbReference type="NCBI Taxonomy" id="9606"/>
    <lineage>
        <taxon>Eukaryota</taxon>
        <taxon>Metazoa</taxon>
        <taxon>Chordata</taxon>
        <taxon>Craniata</taxon>
        <taxon>Vertebrata</taxon>
        <taxon>Euteleostomi</taxon>
        <taxon>Mammalia</taxon>
        <taxon>Eutheria</taxon>
        <taxon>Euarchontoglires</taxon>
        <taxon>Primates</taxon>
        <taxon>Haplorrhini</taxon>
        <taxon>Catarrhini</taxon>
        <taxon>Hominidae</taxon>
        <taxon>Homo</taxon>
    </lineage>
</organism>